<evidence type="ECO:0000250" key="1"/>
<evidence type="ECO:0000255" key="2">
    <source>
        <dbReference type="HAMAP-Rule" id="MF_01109"/>
    </source>
</evidence>
<evidence type="ECO:0000305" key="3"/>
<organism>
    <name type="scientific">Staphylococcus aureus (strain Mu50 / ATCC 700699)</name>
    <dbReference type="NCBI Taxonomy" id="158878"/>
    <lineage>
        <taxon>Bacteria</taxon>
        <taxon>Bacillati</taxon>
        <taxon>Bacillota</taxon>
        <taxon>Bacilli</taxon>
        <taxon>Bacillales</taxon>
        <taxon>Staphylococcaceae</taxon>
        <taxon>Staphylococcus</taxon>
    </lineage>
</organism>
<comment type="function">
    <text evidence="1">Reversibly catalyzes the transfer of the carbamoyl group from carbamoyl phosphate (CP) to the N(epsilon) atom of ornithine (ORN) to produce L-citrulline.</text>
</comment>
<comment type="catalytic activity">
    <reaction>
        <text>carbamoyl phosphate + L-ornithine = L-citrulline + phosphate + H(+)</text>
        <dbReference type="Rhea" id="RHEA:19513"/>
        <dbReference type="ChEBI" id="CHEBI:15378"/>
        <dbReference type="ChEBI" id="CHEBI:43474"/>
        <dbReference type="ChEBI" id="CHEBI:46911"/>
        <dbReference type="ChEBI" id="CHEBI:57743"/>
        <dbReference type="ChEBI" id="CHEBI:58228"/>
        <dbReference type="EC" id="2.1.3.3"/>
    </reaction>
</comment>
<comment type="pathway">
    <text>Amino-acid biosynthesis; L-arginine biosynthesis; L-arginine from L-ornithine and carbamoyl phosphate: step 1/3.</text>
</comment>
<comment type="subcellular location">
    <subcellularLocation>
        <location evidence="1">Cytoplasm</location>
    </subcellularLocation>
</comment>
<comment type="similarity">
    <text evidence="3">Belongs to the aspartate/ornithine carbamoyltransferase superfamily. OTCase family.</text>
</comment>
<dbReference type="EC" id="2.1.3.3"/>
<dbReference type="EMBL" id="BA000017">
    <property type="protein sequence ID" value="BAB57331.1"/>
    <property type="molecule type" value="Genomic_DNA"/>
</dbReference>
<dbReference type="RefSeq" id="WP_000793607.1">
    <property type="nucleotide sequence ID" value="NC_002758.2"/>
</dbReference>
<dbReference type="SMR" id="P0A099"/>
<dbReference type="KEGG" id="sav:SAV1169"/>
<dbReference type="HOGENOM" id="CLU_043846_3_1_9"/>
<dbReference type="PhylomeDB" id="P0A099"/>
<dbReference type="UniPathway" id="UPA00068">
    <property type="reaction ID" value="UER00112"/>
</dbReference>
<dbReference type="Proteomes" id="UP000002481">
    <property type="component" value="Chromosome"/>
</dbReference>
<dbReference type="GO" id="GO:0005737">
    <property type="term" value="C:cytoplasm"/>
    <property type="evidence" value="ECO:0007669"/>
    <property type="project" value="UniProtKB-SubCell"/>
</dbReference>
<dbReference type="GO" id="GO:0016597">
    <property type="term" value="F:amino acid binding"/>
    <property type="evidence" value="ECO:0007669"/>
    <property type="project" value="InterPro"/>
</dbReference>
<dbReference type="GO" id="GO:0004585">
    <property type="term" value="F:ornithine carbamoyltransferase activity"/>
    <property type="evidence" value="ECO:0007669"/>
    <property type="project" value="UniProtKB-UniRule"/>
</dbReference>
<dbReference type="GO" id="GO:0042450">
    <property type="term" value="P:arginine biosynthetic process via ornithine"/>
    <property type="evidence" value="ECO:0007669"/>
    <property type="project" value="TreeGrafter"/>
</dbReference>
<dbReference type="GO" id="GO:0019240">
    <property type="term" value="P:citrulline biosynthetic process"/>
    <property type="evidence" value="ECO:0007669"/>
    <property type="project" value="TreeGrafter"/>
</dbReference>
<dbReference type="GO" id="GO:0006526">
    <property type="term" value="P:L-arginine biosynthetic process"/>
    <property type="evidence" value="ECO:0007669"/>
    <property type="project" value="UniProtKB-UniRule"/>
</dbReference>
<dbReference type="FunFam" id="3.40.50.1370:FF:000004">
    <property type="entry name" value="Ornithine carbamoyltransferase"/>
    <property type="match status" value="1"/>
</dbReference>
<dbReference type="Gene3D" id="3.40.50.1370">
    <property type="entry name" value="Aspartate/ornithine carbamoyltransferase"/>
    <property type="match status" value="2"/>
</dbReference>
<dbReference type="HAMAP" id="MF_01109">
    <property type="entry name" value="OTCase"/>
    <property type="match status" value="1"/>
</dbReference>
<dbReference type="InterPro" id="IPR006132">
    <property type="entry name" value="Asp/Orn_carbamoyltranf_P-bd"/>
</dbReference>
<dbReference type="InterPro" id="IPR006130">
    <property type="entry name" value="Asp/Orn_carbamoylTrfase"/>
</dbReference>
<dbReference type="InterPro" id="IPR036901">
    <property type="entry name" value="Asp/Orn_carbamoylTrfase_sf"/>
</dbReference>
<dbReference type="InterPro" id="IPR006131">
    <property type="entry name" value="Asp_carbamoyltransf_Asp/Orn-bd"/>
</dbReference>
<dbReference type="InterPro" id="IPR002292">
    <property type="entry name" value="Orn/put_carbamltrans"/>
</dbReference>
<dbReference type="InterPro" id="IPR024904">
    <property type="entry name" value="OTCase_ArgI"/>
</dbReference>
<dbReference type="NCBIfam" id="TIGR00658">
    <property type="entry name" value="orni_carb_tr"/>
    <property type="match status" value="1"/>
</dbReference>
<dbReference type="NCBIfam" id="NF001986">
    <property type="entry name" value="PRK00779.1"/>
    <property type="match status" value="1"/>
</dbReference>
<dbReference type="NCBIfam" id="NF003286">
    <property type="entry name" value="PRK04284.1"/>
    <property type="match status" value="1"/>
</dbReference>
<dbReference type="PANTHER" id="PTHR45753:SF2">
    <property type="entry name" value="ORNITHINE CARBAMOYLTRANSFERASE"/>
    <property type="match status" value="1"/>
</dbReference>
<dbReference type="PANTHER" id="PTHR45753">
    <property type="entry name" value="ORNITHINE CARBAMOYLTRANSFERASE, MITOCHONDRIAL"/>
    <property type="match status" value="1"/>
</dbReference>
<dbReference type="Pfam" id="PF00185">
    <property type="entry name" value="OTCace"/>
    <property type="match status" value="1"/>
</dbReference>
<dbReference type="Pfam" id="PF02729">
    <property type="entry name" value="OTCace_N"/>
    <property type="match status" value="1"/>
</dbReference>
<dbReference type="PRINTS" id="PR00100">
    <property type="entry name" value="AOTCASE"/>
</dbReference>
<dbReference type="PRINTS" id="PR00102">
    <property type="entry name" value="OTCASE"/>
</dbReference>
<dbReference type="SUPFAM" id="SSF53671">
    <property type="entry name" value="Aspartate/ornithine carbamoyltransferase"/>
    <property type="match status" value="1"/>
</dbReference>
<dbReference type="PROSITE" id="PS00097">
    <property type="entry name" value="CARBAMOYLTRANSFERASE"/>
    <property type="match status" value="1"/>
</dbReference>
<proteinExistence type="inferred from homology"/>
<gene>
    <name type="primary">argF</name>
    <name type="ordered locus">SAV1169</name>
</gene>
<keyword id="KW-0028">Amino-acid biosynthesis</keyword>
<keyword id="KW-0055">Arginine biosynthesis</keyword>
<keyword id="KW-0963">Cytoplasm</keyword>
<keyword id="KW-0808">Transferase</keyword>
<name>OTC_STAAM</name>
<sequence length="333" mass="37535">MKNLRNRSFLTLLDFSRQEVEFLLTLSEDLKRAKYIGTEKPMLKNKNIALLFEKDSTRTRCAFEVAAHDQGANVTYLGPTGSQMGKKETTKDTARVLGGMYDGIEYRGFSQRTVETLAEYSGVPVWNGLTDEDHPTQVLADFLTAKEVLKKDYADINFTYVGDGRNNVANALMQGAAIMGMNFHLVCPKELNPTDELLNRCKNIAAENGGNILITDDIDQGVKGSDVIYTDVWVSMGEPDEVWKERLELLKPYQVNKEMMDKTGNPNVIFEHCLPSFHNADTKIGQQIFEKYGIREMEVTDEVFESKASVVFQEAENRMHTIKAVMVATLGEF</sequence>
<reference key="1">
    <citation type="journal article" date="2001" name="Lancet">
        <title>Whole genome sequencing of meticillin-resistant Staphylococcus aureus.</title>
        <authorList>
            <person name="Kuroda M."/>
            <person name="Ohta T."/>
            <person name="Uchiyama I."/>
            <person name="Baba T."/>
            <person name="Yuzawa H."/>
            <person name="Kobayashi I."/>
            <person name="Cui L."/>
            <person name="Oguchi A."/>
            <person name="Aoki K."/>
            <person name="Nagai Y."/>
            <person name="Lian J.-Q."/>
            <person name="Ito T."/>
            <person name="Kanamori M."/>
            <person name="Matsumaru H."/>
            <person name="Maruyama A."/>
            <person name="Murakami H."/>
            <person name="Hosoyama A."/>
            <person name="Mizutani-Ui Y."/>
            <person name="Takahashi N.K."/>
            <person name="Sawano T."/>
            <person name="Inoue R."/>
            <person name="Kaito C."/>
            <person name="Sekimizu K."/>
            <person name="Hirakawa H."/>
            <person name="Kuhara S."/>
            <person name="Goto S."/>
            <person name="Yabuzaki J."/>
            <person name="Kanehisa M."/>
            <person name="Yamashita A."/>
            <person name="Oshima K."/>
            <person name="Furuya K."/>
            <person name="Yoshino C."/>
            <person name="Shiba T."/>
            <person name="Hattori M."/>
            <person name="Ogasawara N."/>
            <person name="Hayashi H."/>
            <person name="Hiramatsu K."/>
        </authorList>
    </citation>
    <scope>NUCLEOTIDE SEQUENCE [LARGE SCALE GENOMIC DNA]</scope>
    <source>
        <strain>Mu50 / ATCC 700699</strain>
    </source>
</reference>
<protein>
    <recommendedName>
        <fullName>Ornithine carbamoyltransferase</fullName>
        <shortName>OTCase</shortName>
        <ecNumber>2.1.3.3</ecNumber>
    </recommendedName>
</protein>
<accession>P0A099</accession>
<accession>Q9K3A1</accession>
<feature type="chain" id="PRO_0000113010" description="Ornithine carbamoyltransferase">
    <location>
        <begin position="1"/>
        <end position="333"/>
    </location>
</feature>
<feature type="binding site" evidence="2">
    <location>
        <begin position="56"/>
        <end position="59"/>
    </location>
    <ligand>
        <name>carbamoyl phosphate</name>
        <dbReference type="ChEBI" id="CHEBI:58228"/>
    </ligand>
</feature>
<feature type="binding site" evidence="2">
    <location>
        <position position="83"/>
    </location>
    <ligand>
        <name>carbamoyl phosphate</name>
        <dbReference type="ChEBI" id="CHEBI:58228"/>
    </ligand>
</feature>
<feature type="binding site" evidence="2">
    <location>
        <position position="107"/>
    </location>
    <ligand>
        <name>carbamoyl phosphate</name>
        <dbReference type="ChEBI" id="CHEBI:58228"/>
    </ligand>
</feature>
<feature type="binding site" evidence="2">
    <location>
        <begin position="134"/>
        <end position="137"/>
    </location>
    <ligand>
        <name>carbamoyl phosphate</name>
        <dbReference type="ChEBI" id="CHEBI:58228"/>
    </ligand>
</feature>
<feature type="binding site" evidence="2">
    <location>
        <position position="167"/>
    </location>
    <ligand>
        <name>L-ornithine</name>
        <dbReference type="ChEBI" id="CHEBI:46911"/>
    </ligand>
</feature>
<feature type="binding site" evidence="2">
    <location>
        <position position="231"/>
    </location>
    <ligand>
        <name>L-ornithine</name>
        <dbReference type="ChEBI" id="CHEBI:46911"/>
    </ligand>
</feature>
<feature type="binding site" evidence="2">
    <location>
        <begin position="235"/>
        <end position="236"/>
    </location>
    <ligand>
        <name>L-ornithine</name>
        <dbReference type="ChEBI" id="CHEBI:46911"/>
    </ligand>
</feature>
<feature type="binding site" evidence="2">
    <location>
        <begin position="273"/>
        <end position="274"/>
    </location>
    <ligand>
        <name>carbamoyl phosphate</name>
        <dbReference type="ChEBI" id="CHEBI:58228"/>
    </ligand>
</feature>
<feature type="binding site" evidence="2">
    <location>
        <position position="318"/>
    </location>
    <ligand>
        <name>carbamoyl phosphate</name>
        <dbReference type="ChEBI" id="CHEBI:58228"/>
    </ligand>
</feature>